<organism>
    <name type="scientific">Mycolicibacterium gilvum (strain PYR-GCK)</name>
    <name type="common">Mycobacterium gilvum (strain PYR-GCK)</name>
    <dbReference type="NCBI Taxonomy" id="350054"/>
    <lineage>
        <taxon>Bacteria</taxon>
        <taxon>Bacillati</taxon>
        <taxon>Actinomycetota</taxon>
        <taxon>Actinomycetes</taxon>
        <taxon>Mycobacteriales</taxon>
        <taxon>Mycobacteriaceae</taxon>
        <taxon>Mycolicibacterium</taxon>
    </lineage>
</organism>
<dbReference type="EC" id="4.2.1.11" evidence="1"/>
<dbReference type="EMBL" id="CP000656">
    <property type="protein sequence ID" value="ABP44434.1"/>
    <property type="molecule type" value="Genomic_DNA"/>
</dbReference>
<dbReference type="SMR" id="A4T6L5"/>
<dbReference type="STRING" id="350054.Mflv_1954"/>
<dbReference type="KEGG" id="mgi:Mflv_1954"/>
<dbReference type="eggNOG" id="COG4948">
    <property type="taxonomic scope" value="Bacteria"/>
</dbReference>
<dbReference type="HOGENOM" id="CLU_031223_2_1_11"/>
<dbReference type="OrthoDB" id="9804716at2"/>
<dbReference type="UniPathway" id="UPA00109">
    <property type="reaction ID" value="UER00187"/>
</dbReference>
<dbReference type="GO" id="GO:0009986">
    <property type="term" value="C:cell surface"/>
    <property type="evidence" value="ECO:0007669"/>
    <property type="project" value="UniProtKB-SubCell"/>
</dbReference>
<dbReference type="GO" id="GO:0005576">
    <property type="term" value="C:extracellular region"/>
    <property type="evidence" value="ECO:0007669"/>
    <property type="project" value="UniProtKB-SubCell"/>
</dbReference>
<dbReference type="GO" id="GO:0000015">
    <property type="term" value="C:phosphopyruvate hydratase complex"/>
    <property type="evidence" value="ECO:0007669"/>
    <property type="project" value="InterPro"/>
</dbReference>
<dbReference type="GO" id="GO:0000287">
    <property type="term" value="F:magnesium ion binding"/>
    <property type="evidence" value="ECO:0007669"/>
    <property type="project" value="UniProtKB-UniRule"/>
</dbReference>
<dbReference type="GO" id="GO:0004634">
    <property type="term" value="F:phosphopyruvate hydratase activity"/>
    <property type="evidence" value="ECO:0007669"/>
    <property type="project" value="UniProtKB-UniRule"/>
</dbReference>
<dbReference type="GO" id="GO:0006096">
    <property type="term" value="P:glycolytic process"/>
    <property type="evidence" value="ECO:0007669"/>
    <property type="project" value="UniProtKB-UniRule"/>
</dbReference>
<dbReference type="CDD" id="cd03313">
    <property type="entry name" value="enolase"/>
    <property type="match status" value="1"/>
</dbReference>
<dbReference type="FunFam" id="3.20.20.120:FF:000001">
    <property type="entry name" value="Enolase"/>
    <property type="match status" value="1"/>
</dbReference>
<dbReference type="FunFam" id="3.30.390.10:FF:000001">
    <property type="entry name" value="Enolase"/>
    <property type="match status" value="1"/>
</dbReference>
<dbReference type="Gene3D" id="3.20.20.120">
    <property type="entry name" value="Enolase-like C-terminal domain"/>
    <property type="match status" value="1"/>
</dbReference>
<dbReference type="Gene3D" id="3.30.390.10">
    <property type="entry name" value="Enolase-like, N-terminal domain"/>
    <property type="match status" value="1"/>
</dbReference>
<dbReference type="HAMAP" id="MF_00318">
    <property type="entry name" value="Enolase"/>
    <property type="match status" value="1"/>
</dbReference>
<dbReference type="InterPro" id="IPR000941">
    <property type="entry name" value="Enolase"/>
</dbReference>
<dbReference type="InterPro" id="IPR036849">
    <property type="entry name" value="Enolase-like_C_sf"/>
</dbReference>
<dbReference type="InterPro" id="IPR029017">
    <property type="entry name" value="Enolase-like_N"/>
</dbReference>
<dbReference type="InterPro" id="IPR020810">
    <property type="entry name" value="Enolase_C"/>
</dbReference>
<dbReference type="InterPro" id="IPR020809">
    <property type="entry name" value="Enolase_CS"/>
</dbReference>
<dbReference type="InterPro" id="IPR020811">
    <property type="entry name" value="Enolase_N"/>
</dbReference>
<dbReference type="NCBIfam" id="TIGR01060">
    <property type="entry name" value="eno"/>
    <property type="match status" value="1"/>
</dbReference>
<dbReference type="PANTHER" id="PTHR11902">
    <property type="entry name" value="ENOLASE"/>
    <property type="match status" value="1"/>
</dbReference>
<dbReference type="PANTHER" id="PTHR11902:SF1">
    <property type="entry name" value="ENOLASE"/>
    <property type="match status" value="1"/>
</dbReference>
<dbReference type="Pfam" id="PF00113">
    <property type="entry name" value="Enolase_C"/>
    <property type="match status" value="1"/>
</dbReference>
<dbReference type="Pfam" id="PF03952">
    <property type="entry name" value="Enolase_N"/>
    <property type="match status" value="1"/>
</dbReference>
<dbReference type="PIRSF" id="PIRSF001400">
    <property type="entry name" value="Enolase"/>
    <property type="match status" value="1"/>
</dbReference>
<dbReference type="PRINTS" id="PR00148">
    <property type="entry name" value="ENOLASE"/>
</dbReference>
<dbReference type="SFLD" id="SFLDF00002">
    <property type="entry name" value="enolase"/>
    <property type="match status" value="1"/>
</dbReference>
<dbReference type="SFLD" id="SFLDG00178">
    <property type="entry name" value="enolase"/>
    <property type="match status" value="1"/>
</dbReference>
<dbReference type="SMART" id="SM01192">
    <property type="entry name" value="Enolase_C"/>
    <property type="match status" value="1"/>
</dbReference>
<dbReference type="SMART" id="SM01193">
    <property type="entry name" value="Enolase_N"/>
    <property type="match status" value="1"/>
</dbReference>
<dbReference type="SUPFAM" id="SSF51604">
    <property type="entry name" value="Enolase C-terminal domain-like"/>
    <property type="match status" value="1"/>
</dbReference>
<dbReference type="SUPFAM" id="SSF54826">
    <property type="entry name" value="Enolase N-terminal domain-like"/>
    <property type="match status" value="1"/>
</dbReference>
<dbReference type="PROSITE" id="PS00164">
    <property type="entry name" value="ENOLASE"/>
    <property type="match status" value="1"/>
</dbReference>
<evidence type="ECO:0000255" key="1">
    <source>
        <dbReference type="HAMAP-Rule" id="MF_00318"/>
    </source>
</evidence>
<protein>
    <recommendedName>
        <fullName evidence="1">Enolase</fullName>
        <ecNumber evidence="1">4.2.1.11</ecNumber>
    </recommendedName>
    <alternativeName>
        <fullName evidence="1">2-phospho-D-glycerate hydro-lyase</fullName>
    </alternativeName>
    <alternativeName>
        <fullName evidence="1">2-phosphoglycerate dehydratase</fullName>
    </alternativeName>
</protein>
<name>ENO_MYCGI</name>
<proteinExistence type="inferred from homology"/>
<reference key="1">
    <citation type="submission" date="2007-04" db="EMBL/GenBank/DDBJ databases">
        <title>Complete sequence of chromosome of Mycobacterium gilvum PYR-GCK.</title>
        <authorList>
            <consortium name="US DOE Joint Genome Institute"/>
            <person name="Copeland A."/>
            <person name="Lucas S."/>
            <person name="Lapidus A."/>
            <person name="Barry K."/>
            <person name="Detter J.C."/>
            <person name="Glavina del Rio T."/>
            <person name="Hammon N."/>
            <person name="Israni S."/>
            <person name="Dalin E."/>
            <person name="Tice H."/>
            <person name="Pitluck S."/>
            <person name="Chain P."/>
            <person name="Malfatti S."/>
            <person name="Shin M."/>
            <person name="Vergez L."/>
            <person name="Schmutz J."/>
            <person name="Larimer F."/>
            <person name="Land M."/>
            <person name="Hauser L."/>
            <person name="Kyrpides N."/>
            <person name="Mikhailova N."/>
            <person name="Miller C."/>
            <person name="Richardson P."/>
        </authorList>
    </citation>
    <scope>NUCLEOTIDE SEQUENCE [LARGE SCALE GENOMIC DNA]</scope>
    <source>
        <strain>PYR-GCK</strain>
    </source>
</reference>
<sequence length="429" mass="45014">MPIIEQVGAREILDSRGNPTVEVEVGLLDGTVARAAVPSGASTGEHEAVELRDGGSRYLGKGVEKAVEAVLDEIAPAVIGLGADEQRLVDQALLDLDGTPDKSRLGANAILGVSLAVAKAAAQSAELPLFRYLGGPNAHILPVPMMNIINGGAHADTGVDVQEFMIAPIGAPSFKEALRWGAEVYHSLKSVLKKQGLSTGLGDEGGFAPDLPGTKAALDLIGTAIEGAGLKIGSDVALALDVAATEFYTDGTGYAFEKETRTAEQMAQFYEQLIGAYPLVSIEDPLSEDDWDGWVALTSAIGDRVQLVGDDLFVTNPERLEDGIERGAGNALLVKVNQIGTLTETLDAVSLAHHAGYKTMMSHRSGETEDTTIADLAVAVGSGQIKTGAPARSERVAKYNQLLRIEEELGDAARYAGDLAFPRFGVESK</sequence>
<gene>
    <name evidence="1" type="primary">eno</name>
    <name type="ordered locus">Mflv_1954</name>
</gene>
<accession>A4T6L5</accession>
<keyword id="KW-0963">Cytoplasm</keyword>
<keyword id="KW-0324">Glycolysis</keyword>
<keyword id="KW-0456">Lyase</keyword>
<keyword id="KW-0460">Magnesium</keyword>
<keyword id="KW-0479">Metal-binding</keyword>
<keyword id="KW-0964">Secreted</keyword>
<comment type="function">
    <text evidence="1">Catalyzes the reversible conversion of 2-phosphoglycerate (2-PG) into phosphoenolpyruvate (PEP). It is essential for the degradation of carbohydrates via glycolysis.</text>
</comment>
<comment type="catalytic activity">
    <reaction evidence="1">
        <text>(2R)-2-phosphoglycerate = phosphoenolpyruvate + H2O</text>
        <dbReference type="Rhea" id="RHEA:10164"/>
        <dbReference type="ChEBI" id="CHEBI:15377"/>
        <dbReference type="ChEBI" id="CHEBI:58289"/>
        <dbReference type="ChEBI" id="CHEBI:58702"/>
        <dbReference type="EC" id="4.2.1.11"/>
    </reaction>
</comment>
<comment type="cofactor">
    <cofactor evidence="1">
        <name>Mg(2+)</name>
        <dbReference type="ChEBI" id="CHEBI:18420"/>
    </cofactor>
    <text evidence="1">Binds a second Mg(2+) ion via substrate during catalysis.</text>
</comment>
<comment type="pathway">
    <text evidence="1">Carbohydrate degradation; glycolysis; pyruvate from D-glyceraldehyde 3-phosphate: step 4/5.</text>
</comment>
<comment type="subcellular location">
    <subcellularLocation>
        <location evidence="1">Cytoplasm</location>
    </subcellularLocation>
    <subcellularLocation>
        <location evidence="1">Secreted</location>
    </subcellularLocation>
    <subcellularLocation>
        <location evidence="1">Cell surface</location>
    </subcellularLocation>
    <text evidence="1">Fractions of enolase are present in both the cytoplasm and on the cell surface.</text>
</comment>
<comment type="similarity">
    <text evidence="1">Belongs to the enolase family.</text>
</comment>
<feature type="chain" id="PRO_1000079141" description="Enolase">
    <location>
        <begin position="1"/>
        <end position="429"/>
    </location>
</feature>
<feature type="active site" description="Proton donor" evidence="1">
    <location>
        <position position="204"/>
    </location>
</feature>
<feature type="active site" description="Proton acceptor" evidence="1">
    <location>
        <position position="335"/>
    </location>
</feature>
<feature type="binding site" evidence="1">
    <location>
        <position position="162"/>
    </location>
    <ligand>
        <name>(2R)-2-phosphoglycerate</name>
        <dbReference type="ChEBI" id="CHEBI:58289"/>
    </ligand>
</feature>
<feature type="binding site" evidence="1">
    <location>
        <position position="241"/>
    </location>
    <ligand>
        <name>Mg(2+)</name>
        <dbReference type="ChEBI" id="CHEBI:18420"/>
    </ligand>
</feature>
<feature type="binding site" evidence="1">
    <location>
        <position position="283"/>
    </location>
    <ligand>
        <name>Mg(2+)</name>
        <dbReference type="ChEBI" id="CHEBI:18420"/>
    </ligand>
</feature>
<feature type="binding site" evidence="1">
    <location>
        <position position="310"/>
    </location>
    <ligand>
        <name>Mg(2+)</name>
        <dbReference type="ChEBI" id="CHEBI:18420"/>
    </ligand>
</feature>
<feature type="binding site" evidence="1">
    <location>
        <position position="335"/>
    </location>
    <ligand>
        <name>(2R)-2-phosphoglycerate</name>
        <dbReference type="ChEBI" id="CHEBI:58289"/>
    </ligand>
</feature>
<feature type="binding site" evidence="1">
    <location>
        <position position="364"/>
    </location>
    <ligand>
        <name>(2R)-2-phosphoglycerate</name>
        <dbReference type="ChEBI" id="CHEBI:58289"/>
    </ligand>
</feature>
<feature type="binding site" evidence="1">
    <location>
        <position position="365"/>
    </location>
    <ligand>
        <name>(2R)-2-phosphoglycerate</name>
        <dbReference type="ChEBI" id="CHEBI:58289"/>
    </ligand>
</feature>
<feature type="binding site" evidence="1">
    <location>
        <position position="386"/>
    </location>
    <ligand>
        <name>(2R)-2-phosphoglycerate</name>
        <dbReference type="ChEBI" id="CHEBI:58289"/>
    </ligand>
</feature>